<evidence type="ECO:0000250" key="1"/>
<evidence type="ECO:0000250" key="2">
    <source>
        <dbReference type="UniProtKB" id="Q8C6E0"/>
    </source>
</evidence>
<evidence type="ECO:0000250" key="3">
    <source>
        <dbReference type="UniProtKB" id="Q96G28"/>
    </source>
</evidence>
<evidence type="ECO:0000255" key="4"/>
<evidence type="ECO:0000256" key="5">
    <source>
        <dbReference type="SAM" id="MobiDB-lite"/>
    </source>
</evidence>
<evidence type="ECO:0000303" key="6">
    <source>
    </source>
</evidence>
<evidence type="ECO:0000305" key="7"/>
<evidence type="ECO:0000312" key="8">
    <source>
        <dbReference type="RGD" id="1311732"/>
    </source>
</evidence>
<evidence type="ECO:0007744" key="9">
    <source>
    </source>
</evidence>
<reference key="1">
    <citation type="journal article" date="2004" name="Genome Res.">
        <title>The status, quality, and expansion of the NIH full-length cDNA project: the Mammalian Gene Collection (MGC).</title>
        <authorList>
            <consortium name="The MGC Project Team"/>
        </authorList>
    </citation>
    <scope>NUCLEOTIDE SEQUENCE [LARGE SCALE MRNA]</scope>
    <source>
        <tissue>Testis</tissue>
    </source>
</reference>
<reference key="2">
    <citation type="journal article" date="2010" name="Cancer Immunol. Immunother.">
        <title>Antibody to CCDC104 is associated with a paraneoplastic antibody to CDR2 (anti-Yo).</title>
        <authorList>
            <person name="Totland C."/>
            <person name="Bredholt G."/>
            <person name="Haugen M."/>
            <person name="Haukanes B.I."/>
            <person name="Vedeler C.A."/>
        </authorList>
    </citation>
    <scope>SUBCELLULAR LOCATION</scope>
    <scope>TISSUE SPECIFICITY</scope>
</reference>
<reference key="3">
    <citation type="journal article" date="2012" name="Nat. Commun.">
        <title>Quantitative maps of protein phosphorylation sites across 14 different rat organs and tissues.</title>
        <authorList>
            <person name="Lundby A."/>
            <person name="Secher A."/>
            <person name="Lage K."/>
            <person name="Nordsborg N.B."/>
            <person name="Dmytriyev A."/>
            <person name="Lundby C."/>
            <person name="Olsen J.V."/>
        </authorList>
    </citation>
    <scope>PHOSPHORYLATION [LARGE SCALE ANALYSIS] AT SER-201</scope>
    <scope>IDENTIFICATION BY MASS SPECTROMETRY [LARGE SCALE ANALYSIS]</scope>
</reference>
<dbReference type="EMBL" id="BC097425">
    <property type="protein sequence ID" value="AAH97425.1"/>
    <property type="molecule type" value="mRNA"/>
</dbReference>
<dbReference type="RefSeq" id="NP_001020037.1">
    <property type="nucleotide sequence ID" value="NM_001024866.2"/>
</dbReference>
<dbReference type="SMR" id="Q4V8E4"/>
<dbReference type="FunCoup" id="Q4V8E4">
    <property type="interactions" value="1182"/>
</dbReference>
<dbReference type="STRING" id="10116.ENSRNOP00000005306"/>
<dbReference type="iPTMnet" id="Q4V8E4"/>
<dbReference type="PhosphoSitePlus" id="Q4V8E4"/>
<dbReference type="PaxDb" id="10116-ENSRNOP00000005306"/>
<dbReference type="Ensembl" id="ENSRNOT00000005306.6">
    <property type="protein sequence ID" value="ENSRNOP00000005306.4"/>
    <property type="gene ID" value="ENSRNOG00000003901.7"/>
</dbReference>
<dbReference type="GeneID" id="289859"/>
<dbReference type="KEGG" id="rno:289859"/>
<dbReference type="UCSC" id="RGD:1311732">
    <property type="organism name" value="rat"/>
</dbReference>
<dbReference type="AGR" id="RGD:1311732"/>
<dbReference type="CTD" id="112942"/>
<dbReference type="RGD" id="1311732">
    <property type="gene designation" value="Cfap36"/>
</dbReference>
<dbReference type="eggNOG" id="KOG4511">
    <property type="taxonomic scope" value="Eukaryota"/>
</dbReference>
<dbReference type="GeneTree" id="ENSGT00390000012785"/>
<dbReference type="HOGENOM" id="CLU_050059_0_0_1"/>
<dbReference type="InParanoid" id="Q4V8E4"/>
<dbReference type="OMA" id="HKSPGHF"/>
<dbReference type="OrthoDB" id="272687at2759"/>
<dbReference type="PhylomeDB" id="Q4V8E4"/>
<dbReference type="TreeFam" id="TF315143"/>
<dbReference type="PRO" id="PR:Q4V8E4"/>
<dbReference type="Proteomes" id="UP000002494">
    <property type="component" value="Chromosome 14"/>
</dbReference>
<dbReference type="Bgee" id="ENSRNOG00000003901">
    <property type="expression patterns" value="Expressed in testis and 20 other cell types or tissues"/>
</dbReference>
<dbReference type="GO" id="GO:0005930">
    <property type="term" value="C:axoneme"/>
    <property type="evidence" value="ECO:0000318"/>
    <property type="project" value="GO_Central"/>
</dbReference>
<dbReference type="GO" id="GO:0097546">
    <property type="term" value="C:ciliary base"/>
    <property type="evidence" value="ECO:0000266"/>
    <property type="project" value="RGD"/>
</dbReference>
<dbReference type="GO" id="GO:0035869">
    <property type="term" value="C:ciliary transition zone"/>
    <property type="evidence" value="ECO:0000266"/>
    <property type="project" value="RGD"/>
</dbReference>
<dbReference type="GO" id="GO:0031514">
    <property type="term" value="C:motile cilium"/>
    <property type="evidence" value="ECO:0007669"/>
    <property type="project" value="UniProtKB-SubCell"/>
</dbReference>
<dbReference type="GO" id="GO:0005634">
    <property type="term" value="C:nucleus"/>
    <property type="evidence" value="ECO:0007669"/>
    <property type="project" value="UniProtKB-SubCell"/>
</dbReference>
<dbReference type="FunFam" id="1.20.1520.10:FF:000001">
    <property type="entry name" value="Cilia- and flagella-associated protein 36"/>
    <property type="match status" value="1"/>
</dbReference>
<dbReference type="Gene3D" id="1.20.1520.10">
    <property type="entry name" value="ADP-ribosylation factor-like 2-binding protein, domain"/>
    <property type="match status" value="1"/>
</dbReference>
<dbReference type="InterPro" id="IPR023379">
    <property type="entry name" value="BART_dom"/>
</dbReference>
<dbReference type="InterPro" id="IPR042541">
    <property type="entry name" value="BART_sf"/>
</dbReference>
<dbReference type="InterPro" id="IPR038888">
    <property type="entry name" value="CFAP36"/>
</dbReference>
<dbReference type="PANTHER" id="PTHR21532:SF0">
    <property type="entry name" value="CILIA- AND FLAGELLA-ASSOCIATED PROTEIN 36"/>
    <property type="match status" value="1"/>
</dbReference>
<dbReference type="PANTHER" id="PTHR21532">
    <property type="entry name" value="PHOSPHODIESTERASE HL"/>
    <property type="match status" value="1"/>
</dbReference>
<dbReference type="Pfam" id="PF11527">
    <property type="entry name" value="ARL2_Bind_BART"/>
    <property type="match status" value="1"/>
</dbReference>
<gene>
    <name evidence="7" type="primary">Cfap36</name>
    <name evidence="8" type="synonym">Ccdc104</name>
</gene>
<comment type="function">
    <text evidence="1">May act as an effector for ARL3.</text>
</comment>
<comment type="subunit">
    <text evidence="1">Interacts with ARL3.</text>
</comment>
<comment type="subcellular location">
    <subcellularLocation>
        <location evidence="3">Nucleus</location>
    </subcellularLocation>
    <subcellularLocation>
        <location evidence="3">Cytoplasm</location>
    </subcellularLocation>
    <subcellularLocation>
        <location evidence="7">Cell projection</location>
        <location evidence="7">Cilium</location>
        <location evidence="7">Flagellum</location>
    </subcellularLocation>
</comment>
<comment type="tissue specificity">
    <text evidence="6">Widely expressed (at protein level).</text>
</comment>
<comment type="similarity">
    <text evidence="7">Belongs to the CFAP36 family.</text>
</comment>
<sequence length="343" mass="39590">MAAEEEDEVEWVVESIAGFLRGPDWSIPILDFVEQKCEVFDDEEESKLTYTEIHQEYKELVEKLLESYLKEIGINEDQFQEACTSPLAKTRTSQAILQPVLAAEDFTIFKAMMVQKNIEMQLQAIRIIQERNGVLPDCLTDGADVVSDLEQEEMKILREVLRKSKEEYDQEEERKRKKQSSEGKMEEPPIYTSETAKLTNSQGDGEHFVQPSSEVKVHFTNQSVQPLARKMELLPETSSLTQKGLKIPGLEHASMEGPIANLSALGTEELRQREHYLKQKRDKLMSMRKDMRAKQIQNTEQKGKPTREAEEMTEKPEMTAEEKQTLLKRRLLAEKLKEEVINK</sequence>
<protein>
    <recommendedName>
        <fullName evidence="7">Cilia- and flagella-associated protein 36</fullName>
    </recommendedName>
    <alternativeName>
        <fullName evidence="8">Coiled-coil domain-containing protein 104</fullName>
    </alternativeName>
</protein>
<name>CFA36_RAT</name>
<keyword id="KW-0966">Cell projection</keyword>
<keyword id="KW-0969">Cilium</keyword>
<keyword id="KW-0175">Coiled coil</keyword>
<keyword id="KW-0963">Cytoplasm</keyword>
<keyword id="KW-0282">Flagellum</keyword>
<keyword id="KW-0539">Nucleus</keyword>
<keyword id="KW-0597">Phosphoprotein</keyword>
<keyword id="KW-1185">Reference proteome</keyword>
<feature type="chain" id="PRO_0000278640" description="Cilia- and flagella-associated protein 36">
    <location>
        <begin position="1"/>
        <end position="343"/>
    </location>
</feature>
<feature type="region of interest" description="Disordered" evidence="5">
    <location>
        <begin position="165"/>
        <end position="191"/>
    </location>
</feature>
<feature type="region of interest" description="Disordered" evidence="5">
    <location>
        <begin position="286"/>
        <end position="323"/>
    </location>
</feature>
<feature type="coiled-coil region" evidence="4">
    <location>
        <begin position="147"/>
        <end position="181"/>
    </location>
</feature>
<feature type="compositionally biased region" description="Basic and acidic residues" evidence="5">
    <location>
        <begin position="301"/>
        <end position="323"/>
    </location>
</feature>
<feature type="modified residue" description="Phosphoserine" evidence="2">
    <location>
        <position position="85"/>
    </location>
</feature>
<feature type="modified residue" description="Phosphoserine" evidence="2">
    <location>
        <position position="147"/>
    </location>
</feature>
<feature type="modified residue" description="Phosphoserine" evidence="9">
    <location>
        <position position="201"/>
    </location>
</feature>
<proteinExistence type="evidence at protein level"/>
<accession>Q4V8E4</accession>
<organism>
    <name type="scientific">Rattus norvegicus</name>
    <name type="common">Rat</name>
    <dbReference type="NCBI Taxonomy" id="10116"/>
    <lineage>
        <taxon>Eukaryota</taxon>
        <taxon>Metazoa</taxon>
        <taxon>Chordata</taxon>
        <taxon>Craniata</taxon>
        <taxon>Vertebrata</taxon>
        <taxon>Euteleostomi</taxon>
        <taxon>Mammalia</taxon>
        <taxon>Eutheria</taxon>
        <taxon>Euarchontoglires</taxon>
        <taxon>Glires</taxon>
        <taxon>Rodentia</taxon>
        <taxon>Myomorpha</taxon>
        <taxon>Muroidea</taxon>
        <taxon>Muridae</taxon>
        <taxon>Murinae</taxon>
        <taxon>Rattus</taxon>
    </lineage>
</organism>